<dbReference type="EMBL" id="AE017194">
    <property type="protein sequence ID" value="AAS44329.1"/>
    <property type="molecule type" value="Genomic_DNA"/>
</dbReference>
<dbReference type="SMR" id="Q72XE9"/>
<dbReference type="KEGG" id="bca:BCE_5429"/>
<dbReference type="HOGENOM" id="CLU_084338_1_3_9"/>
<dbReference type="Proteomes" id="UP000002527">
    <property type="component" value="Chromosome"/>
</dbReference>
<dbReference type="GO" id="GO:0005886">
    <property type="term" value="C:plasma membrane"/>
    <property type="evidence" value="ECO:0007669"/>
    <property type="project" value="UniProtKB-SubCell"/>
</dbReference>
<dbReference type="GO" id="GO:0045259">
    <property type="term" value="C:proton-transporting ATP synthase complex"/>
    <property type="evidence" value="ECO:0007669"/>
    <property type="project" value="UniProtKB-KW"/>
</dbReference>
<dbReference type="GO" id="GO:0005524">
    <property type="term" value="F:ATP binding"/>
    <property type="evidence" value="ECO:0007669"/>
    <property type="project" value="UniProtKB-UniRule"/>
</dbReference>
<dbReference type="GO" id="GO:0046933">
    <property type="term" value="F:proton-transporting ATP synthase activity, rotational mechanism"/>
    <property type="evidence" value="ECO:0007669"/>
    <property type="project" value="UniProtKB-UniRule"/>
</dbReference>
<dbReference type="CDD" id="cd12152">
    <property type="entry name" value="F1-ATPase_delta"/>
    <property type="match status" value="1"/>
</dbReference>
<dbReference type="FunFam" id="1.20.5.440:FF:000001">
    <property type="entry name" value="ATP synthase epsilon chain"/>
    <property type="match status" value="1"/>
</dbReference>
<dbReference type="FunFam" id="2.60.15.10:FF:000001">
    <property type="entry name" value="ATP synthase epsilon chain"/>
    <property type="match status" value="1"/>
</dbReference>
<dbReference type="Gene3D" id="1.20.5.440">
    <property type="entry name" value="ATP synthase delta/epsilon subunit, C-terminal domain"/>
    <property type="match status" value="1"/>
</dbReference>
<dbReference type="Gene3D" id="2.60.15.10">
    <property type="entry name" value="F0F1 ATP synthase delta/epsilon subunit, N-terminal"/>
    <property type="match status" value="1"/>
</dbReference>
<dbReference type="HAMAP" id="MF_00530">
    <property type="entry name" value="ATP_synth_epsil_bac"/>
    <property type="match status" value="1"/>
</dbReference>
<dbReference type="InterPro" id="IPR036794">
    <property type="entry name" value="ATP_F1_dsu/esu_C_sf"/>
</dbReference>
<dbReference type="InterPro" id="IPR001469">
    <property type="entry name" value="ATP_synth_F1_dsu/esu"/>
</dbReference>
<dbReference type="InterPro" id="IPR020546">
    <property type="entry name" value="ATP_synth_F1_dsu/esu_N"/>
</dbReference>
<dbReference type="InterPro" id="IPR020547">
    <property type="entry name" value="ATP_synth_F1_esu_C"/>
</dbReference>
<dbReference type="InterPro" id="IPR036771">
    <property type="entry name" value="ATPsynth_dsu/esu_N"/>
</dbReference>
<dbReference type="NCBIfam" id="TIGR01216">
    <property type="entry name" value="ATP_synt_epsi"/>
    <property type="match status" value="1"/>
</dbReference>
<dbReference type="NCBIfam" id="NF001846">
    <property type="entry name" value="PRK00571.1-3"/>
    <property type="match status" value="1"/>
</dbReference>
<dbReference type="NCBIfam" id="NF009980">
    <property type="entry name" value="PRK13446.1"/>
    <property type="match status" value="1"/>
</dbReference>
<dbReference type="PANTHER" id="PTHR13822">
    <property type="entry name" value="ATP SYNTHASE DELTA/EPSILON CHAIN"/>
    <property type="match status" value="1"/>
</dbReference>
<dbReference type="PANTHER" id="PTHR13822:SF10">
    <property type="entry name" value="ATP SYNTHASE EPSILON CHAIN, CHLOROPLASTIC"/>
    <property type="match status" value="1"/>
</dbReference>
<dbReference type="Pfam" id="PF00401">
    <property type="entry name" value="ATP-synt_DE"/>
    <property type="match status" value="1"/>
</dbReference>
<dbReference type="Pfam" id="PF02823">
    <property type="entry name" value="ATP-synt_DE_N"/>
    <property type="match status" value="1"/>
</dbReference>
<dbReference type="SUPFAM" id="SSF46604">
    <property type="entry name" value="Epsilon subunit of F1F0-ATP synthase C-terminal domain"/>
    <property type="match status" value="1"/>
</dbReference>
<dbReference type="SUPFAM" id="SSF51344">
    <property type="entry name" value="Epsilon subunit of F1F0-ATP synthase N-terminal domain"/>
    <property type="match status" value="1"/>
</dbReference>
<reference key="1">
    <citation type="journal article" date="2004" name="Nucleic Acids Res.">
        <title>The genome sequence of Bacillus cereus ATCC 10987 reveals metabolic adaptations and a large plasmid related to Bacillus anthracis pXO1.</title>
        <authorList>
            <person name="Rasko D.A."/>
            <person name="Ravel J."/>
            <person name="Oekstad O.A."/>
            <person name="Helgason E."/>
            <person name="Cer R.Z."/>
            <person name="Jiang L."/>
            <person name="Shores K.A."/>
            <person name="Fouts D.E."/>
            <person name="Tourasse N.J."/>
            <person name="Angiuoli S.V."/>
            <person name="Kolonay J.F."/>
            <person name="Nelson W.C."/>
            <person name="Kolstoe A.-B."/>
            <person name="Fraser C.M."/>
            <person name="Read T.D."/>
        </authorList>
    </citation>
    <scope>NUCLEOTIDE SEQUENCE [LARGE SCALE GENOMIC DNA]</scope>
    <source>
        <strain>ATCC 10987 / NRS 248</strain>
    </source>
</reference>
<gene>
    <name evidence="1" type="primary">atpC</name>
    <name type="ordered locus">BCE_5429</name>
</gene>
<evidence type="ECO:0000255" key="1">
    <source>
        <dbReference type="HAMAP-Rule" id="MF_00530"/>
    </source>
</evidence>
<proteinExistence type="inferred from homology"/>
<feature type="chain" id="PRO_0000188091" description="ATP synthase epsilon chain">
    <location>
        <begin position="1"/>
        <end position="133"/>
    </location>
</feature>
<protein>
    <recommendedName>
        <fullName evidence="1">ATP synthase epsilon chain</fullName>
    </recommendedName>
    <alternativeName>
        <fullName evidence="1">ATP synthase F1 sector epsilon subunit</fullName>
    </alternativeName>
    <alternativeName>
        <fullName evidence="1">F-ATPase epsilon subunit</fullName>
    </alternativeName>
</protein>
<keyword id="KW-0066">ATP synthesis</keyword>
<keyword id="KW-1003">Cell membrane</keyword>
<keyword id="KW-0139">CF(1)</keyword>
<keyword id="KW-0375">Hydrogen ion transport</keyword>
<keyword id="KW-0406">Ion transport</keyword>
<keyword id="KW-0472">Membrane</keyword>
<keyword id="KW-0813">Transport</keyword>
<organism>
    <name type="scientific">Bacillus cereus (strain ATCC 10987 / NRS 248)</name>
    <dbReference type="NCBI Taxonomy" id="222523"/>
    <lineage>
        <taxon>Bacteria</taxon>
        <taxon>Bacillati</taxon>
        <taxon>Bacillota</taxon>
        <taxon>Bacilli</taxon>
        <taxon>Bacillales</taxon>
        <taxon>Bacillaceae</taxon>
        <taxon>Bacillus</taxon>
        <taxon>Bacillus cereus group</taxon>
    </lineage>
</organism>
<name>ATPE_BACC1</name>
<comment type="function">
    <text evidence="1">Produces ATP from ADP in the presence of a proton gradient across the membrane.</text>
</comment>
<comment type="subunit">
    <text>F-type ATPases have 2 components, CF(1) - the catalytic core - and CF(0) - the membrane proton channel. CF(1) has five subunits: alpha(3), beta(3), gamma(1), delta(1), epsilon(1). CF(0) has three main subunits: a, b and c.</text>
</comment>
<comment type="subcellular location">
    <subcellularLocation>
        <location evidence="1">Cell membrane</location>
        <topology evidence="1">Peripheral membrane protein</topology>
    </subcellularLocation>
</comment>
<comment type="similarity">
    <text evidence="1">Belongs to the ATPase epsilon chain family.</text>
</comment>
<sequence>MKTFPVSIVTPDGPVYEKEVEMVSVKAESGEMGILPGHIPTVAPLKISAVRLKNGGHTDYVAVSGGFIEVRPDKVTVLSSSAEEANHIDIHRANEAKRRAEQRLQDKQAHVDFKRAEMALQRAVNRLNVSDMK</sequence>
<accession>Q72XE9</accession>